<evidence type="ECO:0000255" key="1">
    <source>
        <dbReference type="HAMAP-Rule" id="MF_00184"/>
    </source>
</evidence>
<evidence type="ECO:0000255" key="2">
    <source>
        <dbReference type="PROSITE-ProRule" id="PRU01228"/>
    </source>
</evidence>
<sequence length="650" mass="72874">MSDLVKVTLPDGSQKEAPRGTPVIDFVKGQIGAGLAKAAYFAKLDGAPVDLSRALDRDARLEIVTTRSPEALEVARHDAAHVMASVVQKLYPGTQVTIGPAIEDGFYYDFARETPFTPEDLEKIEKATNEAIKADLPFVRSEISMEAALALFEGMGERYKVEIVKDIAAKGAKTLTLYKHGDWVDFCLGPHGPSTGRIGVVKLLNVAGAYWRGDAKNAMLQRIYGTAFFDKKELDAHLAKLEEVKKRDHRRLGPQLGLFTFHEYAPGAPFWLPAGTVLYNVLEDAMRRLVLKNGYQEVKTPLLFNKRLWETSGHWGKYRENMFLVVDSESDPALALEDRCSFSLKPMNCPSHHLIYRMDKRSYRELPVRYFTTDALHRNEASGSLGGLTRVRQFEQDDAHIYLREEQVTDEVLRIFELMKVVYGAFGLGFEATFSTRPEQRIGDDALWDRAEALLRKSLDATGLKWTLNPGDGAFYGPKIDMLVTDSLGRRWQTCTIQLDYAAPERFDLTFVGEDNKEHRPVVIHRAIYGSFERFIAILTEHYAGAFPAWLAPVQARVVTVSDRFDAWAREAAAALQARGWRVEVDGSSDKLGAKIRNAQLAKIPFTLVVGEKEVEARGVSPRRHGGEDLKTMPLETFAELMAREATAPF</sequence>
<dbReference type="EC" id="6.1.1.3" evidence="1"/>
<dbReference type="EMBL" id="CP000251">
    <property type="protein sequence ID" value="ABC81753.1"/>
    <property type="molecule type" value="Genomic_DNA"/>
</dbReference>
<dbReference type="RefSeq" id="WP_011421035.1">
    <property type="nucleotide sequence ID" value="NC_007760.1"/>
</dbReference>
<dbReference type="SMR" id="Q2IJC0"/>
<dbReference type="STRING" id="290397.Adeh_1982"/>
<dbReference type="KEGG" id="ade:Adeh_1982"/>
<dbReference type="eggNOG" id="COG0441">
    <property type="taxonomic scope" value="Bacteria"/>
</dbReference>
<dbReference type="HOGENOM" id="CLU_008554_0_1_7"/>
<dbReference type="OrthoDB" id="9802304at2"/>
<dbReference type="Proteomes" id="UP000001935">
    <property type="component" value="Chromosome"/>
</dbReference>
<dbReference type="GO" id="GO:0005737">
    <property type="term" value="C:cytoplasm"/>
    <property type="evidence" value="ECO:0007669"/>
    <property type="project" value="UniProtKB-SubCell"/>
</dbReference>
<dbReference type="GO" id="GO:0005524">
    <property type="term" value="F:ATP binding"/>
    <property type="evidence" value="ECO:0007669"/>
    <property type="project" value="UniProtKB-UniRule"/>
</dbReference>
<dbReference type="GO" id="GO:0046872">
    <property type="term" value="F:metal ion binding"/>
    <property type="evidence" value="ECO:0007669"/>
    <property type="project" value="UniProtKB-KW"/>
</dbReference>
<dbReference type="GO" id="GO:0004829">
    <property type="term" value="F:threonine-tRNA ligase activity"/>
    <property type="evidence" value="ECO:0007669"/>
    <property type="project" value="UniProtKB-UniRule"/>
</dbReference>
<dbReference type="GO" id="GO:0000049">
    <property type="term" value="F:tRNA binding"/>
    <property type="evidence" value="ECO:0007669"/>
    <property type="project" value="UniProtKB-KW"/>
</dbReference>
<dbReference type="GO" id="GO:0006435">
    <property type="term" value="P:threonyl-tRNA aminoacylation"/>
    <property type="evidence" value="ECO:0007669"/>
    <property type="project" value="UniProtKB-UniRule"/>
</dbReference>
<dbReference type="CDD" id="cd01667">
    <property type="entry name" value="TGS_ThrRS"/>
    <property type="match status" value="1"/>
</dbReference>
<dbReference type="CDD" id="cd00860">
    <property type="entry name" value="ThrRS_anticodon"/>
    <property type="match status" value="1"/>
</dbReference>
<dbReference type="CDD" id="cd00771">
    <property type="entry name" value="ThrRS_core"/>
    <property type="match status" value="1"/>
</dbReference>
<dbReference type="FunFam" id="3.30.930.10:FF:000019">
    <property type="entry name" value="Threonine--tRNA ligase"/>
    <property type="match status" value="1"/>
</dbReference>
<dbReference type="FunFam" id="3.40.50.800:FF:000001">
    <property type="entry name" value="Threonine--tRNA ligase"/>
    <property type="match status" value="1"/>
</dbReference>
<dbReference type="FunFam" id="3.30.980.10:FF:000005">
    <property type="entry name" value="Threonyl-tRNA synthetase, mitochondrial"/>
    <property type="match status" value="1"/>
</dbReference>
<dbReference type="Gene3D" id="3.10.20.30">
    <property type="match status" value="1"/>
</dbReference>
<dbReference type="Gene3D" id="3.30.54.20">
    <property type="match status" value="1"/>
</dbReference>
<dbReference type="Gene3D" id="3.40.50.800">
    <property type="entry name" value="Anticodon-binding domain"/>
    <property type="match status" value="1"/>
</dbReference>
<dbReference type="Gene3D" id="3.30.930.10">
    <property type="entry name" value="Bira Bifunctional Protein, Domain 2"/>
    <property type="match status" value="1"/>
</dbReference>
<dbReference type="Gene3D" id="3.30.980.10">
    <property type="entry name" value="Threonyl-trna Synthetase, Chain A, domain 2"/>
    <property type="match status" value="1"/>
</dbReference>
<dbReference type="HAMAP" id="MF_00184">
    <property type="entry name" value="Thr_tRNA_synth"/>
    <property type="match status" value="1"/>
</dbReference>
<dbReference type="InterPro" id="IPR002314">
    <property type="entry name" value="aa-tRNA-synt_IIb"/>
</dbReference>
<dbReference type="InterPro" id="IPR006195">
    <property type="entry name" value="aa-tRNA-synth_II"/>
</dbReference>
<dbReference type="InterPro" id="IPR045864">
    <property type="entry name" value="aa-tRNA-synth_II/BPL/LPL"/>
</dbReference>
<dbReference type="InterPro" id="IPR004154">
    <property type="entry name" value="Anticodon-bd"/>
</dbReference>
<dbReference type="InterPro" id="IPR036621">
    <property type="entry name" value="Anticodon-bd_dom_sf"/>
</dbReference>
<dbReference type="InterPro" id="IPR012675">
    <property type="entry name" value="Beta-grasp_dom_sf"/>
</dbReference>
<dbReference type="InterPro" id="IPR004095">
    <property type="entry name" value="TGS"/>
</dbReference>
<dbReference type="InterPro" id="IPR012676">
    <property type="entry name" value="TGS-like"/>
</dbReference>
<dbReference type="InterPro" id="IPR002320">
    <property type="entry name" value="Thr-tRNA-ligase_IIa"/>
</dbReference>
<dbReference type="InterPro" id="IPR018163">
    <property type="entry name" value="Thr/Ala-tRNA-synth_IIc_edit"/>
</dbReference>
<dbReference type="InterPro" id="IPR047246">
    <property type="entry name" value="ThrRS_anticodon"/>
</dbReference>
<dbReference type="InterPro" id="IPR033728">
    <property type="entry name" value="ThrRS_core"/>
</dbReference>
<dbReference type="InterPro" id="IPR012947">
    <property type="entry name" value="tRNA_SAD"/>
</dbReference>
<dbReference type="NCBIfam" id="TIGR00418">
    <property type="entry name" value="thrS"/>
    <property type="match status" value="1"/>
</dbReference>
<dbReference type="PANTHER" id="PTHR11451:SF44">
    <property type="entry name" value="THREONINE--TRNA LIGASE, CHLOROPLASTIC_MITOCHONDRIAL 2"/>
    <property type="match status" value="1"/>
</dbReference>
<dbReference type="PANTHER" id="PTHR11451">
    <property type="entry name" value="THREONINE-TRNA LIGASE"/>
    <property type="match status" value="1"/>
</dbReference>
<dbReference type="Pfam" id="PF03129">
    <property type="entry name" value="HGTP_anticodon"/>
    <property type="match status" value="1"/>
</dbReference>
<dbReference type="Pfam" id="PF02824">
    <property type="entry name" value="TGS"/>
    <property type="match status" value="1"/>
</dbReference>
<dbReference type="Pfam" id="PF00587">
    <property type="entry name" value="tRNA-synt_2b"/>
    <property type="match status" value="1"/>
</dbReference>
<dbReference type="Pfam" id="PF07973">
    <property type="entry name" value="tRNA_SAD"/>
    <property type="match status" value="1"/>
</dbReference>
<dbReference type="PRINTS" id="PR01047">
    <property type="entry name" value="TRNASYNTHTHR"/>
</dbReference>
<dbReference type="SMART" id="SM00863">
    <property type="entry name" value="tRNA_SAD"/>
    <property type="match status" value="1"/>
</dbReference>
<dbReference type="SUPFAM" id="SSF52954">
    <property type="entry name" value="Class II aaRS ABD-related"/>
    <property type="match status" value="1"/>
</dbReference>
<dbReference type="SUPFAM" id="SSF55681">
    <property type="entry name" value="Class II aaRS and biotin synthetases"/>
    <property type="match status" value="1"/>
</dbReference>
<dbReference type="SUPFAM" id="SSF81271">
    <property type="entry name" value="TGS-like"/>
    <property type="match status" value="1"/>
</dbReference>
<dbReference type="SUPFAM" id="SSF55186">
    <property type="entry name" value="ThrRS/AlaRS common domain"/>
    <property type="match status" value="1"/>
</dbReference>
<dbReference type="PROSITE" id="PS50862">
    <property type="entry name" value="AA_TRNA_LIGASE_II"/>
    <property type="match status" value="1"/>
</dbReference>
<dbReference type="PROSITE" id="PS51880">
    <property type="entry name" value="TGS"/>
    <property type="match status" value="1"/>
</dbReference>
<proteinExistence type="inferred from homology"/>
<keyword id="KW-0030">Aminoacyl-tRNA synthetase</keyword>
<keyword id="KW-0067">ATP-binding</keyword>
<keyword id="KW-0963">Cytoplasm</keyword>
<keyword id="KW-0436">Ligase</keyword>
<keyword id="KW-0479">Metal-binding</keyword>
<keyword id="KW-0547">Nucleotide-binding</keyword>
<keyword id="KW-0648">Protein biosynthesis</keyword>
<keyword id="KW-1185">Reference proteome</keyword>
<keyword id="KW-0694">RNA-binding</keyword>
<keyword id="KW-0820">tRNA-binding</keyword>
<keyword id="KW-0862">Zinc</keyword>
<accession>Q2IJC0</accession>
<comment type="function">
    <text evidence="1">Catalyzes the attachment of threonine to tRNA(Thr) in a two-step reaction: L-threonine is first activated by ATP to form Thr-AMP and then transferred to the acceptor end of tRNA(Thr). Also edits incorrectly charged L-seryl-tRNA(Thr).</text>
</comment>
<comment type="catalytic activity">
    <reaction evidence="1">
        <text>tRNA(Thr) + L-threonine + ATP = L-threonyl-tRNA(Thr) + AMP + diphosphate + H(+)</text>
        <dbReference type="Rhea" id="RHEA:24624"/>
        <dbReference type="Rhea" id="RHEA-COMP:9670"/>
        <dbReference type="Rhea" id="RHEA-COMP:9704"/>
        <dbReference type="ChEBI" id="CHEBI:15378"/>
        <dbReference type="ChEBI" id="CHEBI:30616"/>
        <dbReference type="ChEBI" id="CHEBI:33019"/>
        <dbReference type="ChEBI" id="CHEBI:57926"/>
        <dbReference type="ChEBI" id="CHEBI:78442"/>
        <dbReference type="ChEBI" id="CHEBI:78534"/>
        <dbReference type="ChEBI" id="CHEBI:456215"/>
        <dbReference type="EC" id="6.1.1.3"/>
    </reaction>
</comment>
<comment type="cofactor">
    <cofactor evidence="1">
        <name>Zn(2+)</name>
        <dbReference type="ChEBI" id="CHEBI:29105"/>
    </cofactor>
    <text evidence="1">Binds 1 zinc ion per subunit.</text>
</comment>
<comment type="subunit">
    <text evidence="1">Homodimer.</text>
</comment>
<comment type="subcellular location">
    <subcellularLocation>
        <location evidence="1">Cytoplasm</location>
    </subcellularLocation>
</comment>
<comment type="similarity">
    <text evidence="1">Belongs to the class-II aminoacyl-tRNA synthetase family.</text>
</comment>
<name>SYT_ANADE</name>
<gene>
    <name evidence="1" type="primary">thrS</name>
    <name type="ordered locus">Adeh_1982</name>
</gene>
<protein>
    <recommendedName>
        <fullName evidence="1">Threonine--tRNA ligase</fullName>
        <ecNumber evidence="1">6.1.1.3</ecNumber>
    </recommendedName>
    <alternativeName>
        <fullName evidence="1">Threonyl-tRNA synthetase</fullName>
        <shortName evidence="1">ThrRS</shortName>
    </alternativeName>
</protein>
<reference key="1">
    <citation type="submission" date="2006-01" db="EMBL/GenBank/DDBJ databases">
        <title>Complete sequence of Anaeromyxobacter dehalogenans 2CP-C.</title>
        <authorList>
            <person name="Copeland A."/>
            <person name="Lucas S."/>
            <person name="Lapidus A."/>
            <person name="Barry K."/>
            <person name="Detter J.C."/>
            <person name="Glavina T."/>
            <person name="Hammon N."/>
            <person name="Israni S."/>
            <person name="Pitluck S."/>
            <person name="Brettin T."/>
            <person name="Bruce D."/>
            <person name="Han C."/>
            <person name="Tapia R."/>
            <person name="Gilna P."/>
            <person name="Kiss H."/>
            <person name="Schmutz J."/>
            <person name="Larimer F."/>
            <person name="Land M."/>
            <person name="Kyrpides N."/>
            <person name="Anderson I."/>
            <person name="Sanford R.A."/>
            <person name="Ritalahti K.M."/>
            <person name="Thomas H.S."/>
            <person name="Kirby J.R."/>
            <person name="Zhulin I.B."/>
            <person name="Loeffler F.E."/>
            <person name="Richardson P."/>
        </authorList>
    </citation>
    <scope>NUCLEOTIDE SEQUENCE [LARGE SCALE GENOMIC DNA]</scope>
    <source>
        <strain>2CP-C</strain>
    </source>
</reference>
<organism>
    <name type="scientific">Anaeromyxobacter dehalogenans (strain 2CP-C)</name>
    <dbReference type="NCBI Taxonomy" id="290397"/>
    <lineage>
        <taxon>Bacteria</taxon>
        <taxon>Pseudomonadati</taxon>
        <taxon>Myxococcota</taxon>
        <taxon>Myxococcia</taxon>
        <taxon>Myxococcales</taxon>
        <taxon>Cystobacterineae</taxon>
        <taxon>Anaeromyxobacteraceae</taxon>
        <taxon>Anaeromyxobacter</taxon>
    </lineage>
</organism>
<feature type="chain" id="PRO_1000020336" description="Threonine--tRNA ligase">
    <location>
        <begin position="1"/>
        <end position="650"/>
    </location>
</feature>
<feature type="domain" description="TGS" evidence="2">
    <location>
        <begin position="3"/>
        <end position="65"/>
    </location>
</feature>
<feature type="region of interest" description="Catalytic" evidence="1">
    <location>
        <begin position="248"/>
        <end position="548"/>
    </location>
</feature>
<feature type="binding site" evidence="1">
    <location>
        <position position="349"/>
    </location>
    <ligand>
        <name>Zn(2+)</name>
        <dbReference type="ChEBI" id="CHEBI:29105"/>
    </ligand>
</feature>
<feature type="binding site" evidence="1">
    <location>
        <position position="400"/>
    </location>
    <ligand>
        <name>Zn(2+)</name>
        <dbReference type="ChEBI" id="CHEBI:29105"/>
    </ligand>
</feature>
<feature type="binding site" evidence="1">
    <location>
        <position position="525"/>
    </location>
    <ligand>
        <name>Zn(2+)</name>
        <dbReference type="ChEBI" id="CHEBI:29105"/>
    </ligand>
</feature>